<dbReference type="EC" id="7.1.1.2"/>
<dbReference type="EMBL" id="X96535">
    <property type="protein sequence ID" value="CAA65381.1"/>
    <property type="status" value="ALT_SEQ"/>
    <property type="molecule type" value="Genomic_DNA"/>
</dbReference>
<dbReference type="EMBL" id="X96536">
    <property type="protein sequence ID" value="CAA65381.1"/>
    <property type="status" value="JOINED"/>
    <property type="molecule type" value="Genomic_DNA"/>
</dbReference>
<dbReference type="EMBL" id="Y08501">
    <property type="protein sequence ID" value="CAA69771.3"/>
    <property type="status" value="ALT_SEQ"/>
    <property type="molecule type" value="Genomic_DNA"/>
</dbReference>
<dbReference type="EMBL" id="BK010421">
    <property type="protein sequence ID" value="DAB41493.2"/>
    <property type="status" value="ALT_INIT"/>
    <property type="molecule type" value="Genomic_DNA"/>
</dbReference>
<dbReference type="EMBL" id="AC006225">
    <property type="status" value="NOT_ANNOTATED_CDS"/>
    <property type="molecule type" value="Genomic_DNA"/>
</dbReference>
<dbReference type="EMBL" id="AC007729">
    <property type="status" value="NOT_ANNOTATED_CDS"/>
    <property type="molecule type" value="Genomic_DNA"/>
</dbReference>
<dbReference type="EMBL" id="CP002685">
    <property type="status" value="NOT_ANNOTATED_CDS"/>
    <property type="molecule type" value="Genomic_DNA"/>
</dbReference>
<dbReference type="PIR" id="S71136">
    <property type="entry name" value="S71136"/>
</dbReference>
<dbReference type="RefSeq" id="NP_085584.1">
    <property type="nucleotide sequence ID" value="NC_001284.2"/>
</dbReference>
<dbReference type="PDB" id="7A23">
    <property type="method" value="EM"/>
    <property type="resolution" value="3.70 A"/>
    <property type="chains" value="I=1-499"/>
</dbReference>
<dbReference type="PDB" id="7A24">
    <property type="method" value="EM"/>
    <property type="resolution" value="3.80 A"/>
    <property type="chains" value="I=1-499"/>
</dbReference>
<dbReference type="PDB" id="7AQQ">
    <property type="method" value="EM"/>
    <property type="resolution" value="3.06 A"/>
    <property type="chains" value="N=1-499"/>
</dbReference>
<dbReference type="PDB" id="7AR7">
    <property type="method" value="EM"/>
    <property type="resolution" value="3.72 A"/>
    <property type="chains" value="N=12-499"/>
</dbReference>
<dbReference type="PDB" id="7AR8">
    <property type="method" value="EM"/>
    <property type="resolution" value="3.53 A"/>
    <property type="chains" value="N=1-499"/>
</dbReference>
<dbReference type="PDB" id="7ARB">
    <property type="method" value="EM"/>
    <property type="resolution" value="3.41 A"/>
    <property type="chains" value="N=1-499"/>
</dbReference>
<dbReference type="PDB" id="8BEF">
    <property type="method" value="EM"/>
    <property type="resolution" value="2.13 A"/>
    <property type="chains" value="N=1-499"/>
</dbReference>
<dbReference type="PDB" id="8BPX">
    <property type="method" value="EM"/>
    <property type="resolution" value="2.09 A"/>
    <property type="chains" value="N=1-499"/>
</dbReference>
<dbReference type="PDB" id="8BQ5">
    <property type="method" value="EM"/>
    <property type="resolution" value="2.73 A"/>
    <property type="chains" value="N=1-499"/>
</dbReference>
<dbReference type="PDB" id="8BQ6">
    <property type="method" value="EM"/>
    <property type="resolution" value="2.80 A"/>
    <property type="chains" value="N=1-499"/>
</dbReference>
<dbReference type="PDBsum" id="7A23"/>
<dbReference type="PDBsum" id="7A24"/>
<dbReference type="PDBsum" id="7AQQ"/>
<dbReference type="PDBsum" id="7AR7"/>
<dbReference type="PDBsum" id="7AR8"/>
<dbReference type="PDBsum" id="7ARB"/>
<dbReference type="PDBsum" id="8BEF"/>
<dbReference type="PDBsum" id="8BPX"/>
<dbReference type="PDBsum" id="8BQ5"/>
<dbReference type="PDBsum" id="8BQ6"/>
<dbReference type="EMDB" id="EMD-11872"/>
<dbReference type="EMDB" id="EMD-11875"/>
<dbReference type="EMDB" id="EMD-11876"/>
<dbReference type="EMDB" id="EMD-11878"/>
<dbReference type="EMDB" id="EMD-16000"/>
<dbReference type="EMDB" id="EMD-16168"/>
<dbReference type="EMDB" id="EMD-16171"/>
<dbReference type="EMDB" id="EMD-16172"/>
<dbReference type="SMR" id="O05000"/>
<dbReference type="FunCoup" id="O05000">
    <property type="interactions" value="73"/>
</dbReference>
<dbReference type="IntAct" id="O05000">
    <property type="interactions" value="1"/>
</dbReference>
<dbReference type="STRING" id="3702.A0A2P2CLE9"/>
<dbReference type="PaxDb" id="3702-ATMG00285.1"/>
<dbReference type="Araport" id="ATMG00285"/>
<dbReference type="Araport" id="ATMG01320"/>
<dbReference type="TAIR" id="ATMG00285"/>
<dbReference type="eggNOG" id="KOG4668">
    <property type="taxonomic scope" value="Eukaryota"/>
</dbReference>
<dbReference type="InParanoid" id="O05000"/>
<dbReference type="BioCyc" id="ARA:ATMG00285-MONOMER"/>
<dbReference type="BioCyc" id="ARA:ATMG01320-MONOMER"/>
<dbReference type="PRO" id="PR:O05000"/>
<dbReference type="Proteomes" id="UP000006548">
    <property type="component" value="Chromosome 2"/>
</dbReference>
<dbReference type="Proteomes" id="UP000006548">
    <property type="component" value="Mitochondrion MT"/>
</dbReference>
<dbReference type="ExpressionAtlas" id="O05000">
    <property type="expression patterns" value="baseline and differential"/>
</dbReference>
<dbReference type="GO" id="GO:0005743">
    <property type="term" value="C:mitochondrial inner membrane"/>
    <property type="evidence" value="ECO:0007669"/>
    <property type="project" value="UniProtKB-SubCell"/>
</dbReference>
<dbReference type="GO" id="GO:0009536">
    <property type="term" value="C:plastid"/>
    <property type="evidence" value="ECO:0007669"/>
    <property type="project" value="UniProtKB-ARBA"/>
</dbReference>
<dbReference type="GO" id="GO:0008137">
    <property type="term" value="F:NADH dehydrogenase (ubiquinone) activity"/>
    <property type="evidence" value="ECO:0007669"/>
    <property type="project" value="UniProtKB-EC"/>
</dbReference>
<dbReference type="GO" id="GO:0042773">
    <property type="term" value="P:ATP synthesis coupled electron transport"/>
    <property type="evidence" value="ECO:0007669"/>
    <property type="project" value="InterPro"/>
</dbReference>
<dbReference type="HAMAP" id="MF_00445">
    <property type="entry name" value="NDH1_NuoN_1"/>
    <property type="match status" value="1"/>
</dbReference>
<dbReference type="InterPro" id="IPR010096">
    <property type="entry name" value="NADH-Q_OxRdtase_suN/2"/>
</dbReference>
<dbReference type="InterPro" id="IPR001750">
    <property type="entry name" value="ND/Mrp_TM"/>
</dbReference>
<dbReference type="NCBIfam" id="TIGR01770">
    <property type="entry name" value="NDH_I_N"/>
    <property type="match status" value="1"/>
</dbReference>
<dbReference type="PANTHER" id="PTHR22773">
    <property type="entry name" value="NADH DEHYDROGENASE"/>
    <property type="match status" value="1"/>
</dbReference>
<dbReference type="Pfam" id="PF00361">
    <property type="entry name" value="Proton_antipo_M"/>
    <property type="match status" value="1"/>
</dbReference>
<feature type="chain" id="PRO_0000117551" description="NADH-ubiquinone oxidoreductase chain 2">
    <location>
        <begin position="1"/>
        <end position="499"/>
    </location>
</feature>
<feature type="transmembrane region" description="Helical" evidence="2">
    <location>
        <begin position="15"/>
        <end position="35"/>
    </location>
</feature>
<feature type="transmembrane region" description="Helical" evidence="2">
    <location>
        <begin position="56"/>
        <end position="76"/>
    </location>
</feature>
<feature type="transmembrane region" description="Helical" evidence="2">
    <location>
        <begin position="95"/>
        <end position="115"/>
    </location>
</feature>
<feature type="transmembrane region" description="Helical" evidence="2">
    <location>
        <begin position="122"/>
        <end position="142"/>
    </location>
</feature>
<feature type="transmembrane region" description="Helical" evidence="2">
    <location>
        <begin position="145"/>
        <end position="165"/>
    </location>
</feature>
<feature type="transmembrane region" description="Helical" evidence="2">
    <location>
        <begin position="179"/>
        <end position="199"/>
    </location>
</feature>
<feature type="transmembrane region" description="Helical" evidence="2">
    <location>
        <begin position="226"/>
        <end position="246"/>
    </location>
</feature>
<feature type="transmembrane region" description="Helical" evidence="2">
    <location>
        <begin position="263"/>
        <end position="283"/>
    </location>
</feature>
<feature type="transmembrane region" description="Helical" evidence="2">
    <location>
        <begin position="293"/>
        <end position="313"/>
    </location>
</feature>
<feature type="transmembrane region" description="Helical" evidence="2">
    <location>
        <begin position="319"/>
        <end position="339"/>
    </location>
</feature>
<feature type="transmembrane region" description="Helical" evidence="2">
    <location>
        <begin position="345"/>
        <end position="365"/>
    </location>
</feature>
<feature type="transmembrane region" description="Helical" evidence="2">
    <location>
        <begin position="386"/>
        <end position="406"/>
    </location>
</feature>
<feature type="transmembrane region" description="Helical" evidence="2">
    <location>
        <begin position="411"/>
        <end position="431"/>
    </location>
</feature>
<feature type="transmembrane region" description="Helical" evidence="2">
    <location>
        <begin position="467"/>
        <end position="487"/>
    </location>
</feature>
<feature type="sequence conflict" description="In Ref. 1; CAA65381 and 2; CAA69771." evidence="5" ref="1 2">
    <original>P</original>
    <variation>G</variation>
    <location>
        <position position="193"/>
    </location>
</feature>
<feature type="helix" evidence="7">
    <location>
        <begin position="13"/>
        <end position="19"/>
    </location>
</feature>
<feature type="helix" evidence="7">
    <location>
        <begin position="20"/>
        <end position="40"/>
    </location>
</feature>
<feature type="turn" evidence="7">
    <location>
        <begin position="43"/>
        <end position="46"/>
    </location>
</feature>
<feature type="helix" evidence="7">
    <location>
        <begin position="51"/>
        <end position="71"/>
    </location>
</feature>
<feature type="helix" evidence="7">
    <location>
        <begin position="74"/>
        <end position="77"/>
    </location>
</feature>
<feature type="turn" evidence="7">
    <location>
        <begin position="78"/>
        <end position="86"/>
    </location>
</feature>
<feature type="helix" evidence="7">
    <location>
        <begin position="91"/>
        <end position="109"/>
    </location>
</feature>
<feature type="helix" evidence="7">
    <location>
        <begin position="112"/>
        <end position="118"/>
    </location>
</feature>
<feature type="helix" evidence="7">
    <location>
        <begin position="124"/>
        <end position="141"/>
    </location>
</feature>
<feature type="helix" evidence="7">
    <location>
        <begin position="145"/>
        <end position="163"/>
    </location>
</feature>
<feature type="helix" evidence="7">
    <location>
        <begin position="170"/>
        <end position="201"/>
    </location>
</feature>
<feature type="helix" evidence="7">
    <location>
        <begin position="206"/>
        <end position="213"/>
    </location>
</feature>
<feature type="turn" evidence="7">
    <location>
        <begin position="214"/>
        <end position="216"/>
    </location>
</feature>
<feature type="strand" evidence="6">
    <location>
        <begin position="217"/>
        <end position="220"/>
    </location>
</feature>
<feature type="helix" evidence="7">
    <location>
        <begin position="224"/>
        <end position="240"/>
    </location>
</feature>
<feature type="helix" evidence="7">
    <location>
        <begin position="249"/>
        <end position="256"/>
    </location>
</feature>
<feature type="helix" evidence="7">
    <location>
        <begin position="259"/>
        <end position="265"/>
    </location>
</feature>
<feature type="helix" evidence="7">
    <location>
        <begin position="268"/>
        <end position="281"/>
    </location>
</feature>
<feature type="helix" evidence="7">
    <location>
        <begin position="288"/>
        <end position="311"/>
    </location>
</feature>
<feature type="helix" evidence="7">
    <location>
        <begin position="315"/>
        <end position="336"/>
    </location>
</feature>
<feature type="helix" evidence="7">
    <location>
        <begin position="339"/>
        <end position="367"/>
    </location>
</feature>
<feature type="turn" evidence="7">
    <location>
        <begin position="368"/>
        <end position="370"/>
    </location>
</feature>
<feature type="helix" evidence="7">
    <location>
        <begin position="374"/>
        <end position="377"/>
    </location>
</feature>
<feature type="helix" evidence="7">
    <location>
        <begin position="380"/>
        <end position="383"/>
    </location>
</feature>
<feature type="helix" evidence="7">
    <location>
        <begin position="385"/>
        <end position="399"/>
    </location>
</feature>
<feature type="helix" evidence="7">
    <location>
        <begin position="407"/>
        <end position="417"/>
    </location>
</feature>
<feature type="turn" evidence="7">
    <location>
        <begin position="418"/>
        <end position="421"/>
    </location>
</feature>
<feature type="helix" evidence="7">
    <location>
        <begin position="423"/>
        <end position="448"/>
    </location>
</feature>
<feature type="helix" evidence="7">
    <location>
        <begin position="463"/>
        <end position="478"/>
    </location>
</feature>
<feature type="helix" evidence="7">
    <location>
        <begin position="479"/>
        <end position="481"/>
    </location>
</feature>
<feature type="helix" evidence="7">
    <location>
        <begin position="484"/>
        <end position="496"/>
    </location>
</feature>
<reference key="1">
    <citation type="journal article" date="1996" name="Biol. Chem. Hoppe-Seyler">
        <title>The rps4-gene is encoded upstream of the nad2-gene in Arabidopsis mitochondria.</title>
        <authorList>
            <person name="Lippok B."/>
            <person name="Brennicke A."/>
            <person name="Unseld M."/>
        </authorList>
    </citation>
    <scope>NUCLEOTIDE SEQUENCE [GENOMIC DNA]</scope>
    <source>
        <strain>cv. Columbia</strain>
    </source>
</reference>
<reference key="2">
    <citation type="journal article" date="1997" name="Nat. Genet.">
        <title>The mitochondrial genome of Arabidopsis thaliana contains 57 genes in 366,924 nucleotides.</title>
        <authorList>
            <person name="Unseld M."/>
            <person name="Marienfeld J.R."/>
            <person name="Brandt P."/>
            <person name="Brennicke A."/>
        </authorList>
    </citation>
    <scope>NUCLEOTIDE SEQUENCE [LARGE SCALE GENOMIC DNA]</scope>
    <source>
        <strain>cv. C24</strain>
    </source>
</reference>
<reference key="3">
    <citation type="journal article" date="1999" name="Proc. Natl. Acad. Sci. U.S.A.">
        <title>RNA editing in Arabidopsis mitochondria effects 441 C to U changes in ORFs.</title>
        <authorList>
            <person name="Giege P."/>
            <person name="Brennicke A."/>
        </authorList>
    </citation>
    <scope>NUCLEOTIDE SEQUENCE [GENOMIC DNA]</scope>
    <scope>RNA EDITING</scope>
</reference>
<reference key="4">
    <citation type="journal article" date="2018" name="Plant Cell">
        <title>Correction of persistent errors in Arabidopsis reference mitochondrial genomes.</title>
        <authorList>
            <person name="Sloan D.B."/>
            <person name="Wu Z."/>
            <person name="Sharbrough J."/>
        </authorList>
    </citation>
    <scope>NUCLEOTIDE SEQUENCE [LARGE SCALE GENOMIC DNA]</scope>
    <scope>RNA EDITING</scope>
    <source>
        <strain>cv. Columbia</strain>
    </source>
</reference>
<reference key="5">
    <citation type="journal article" date="1999" name="Nature">
        <title>Sequence and analysis of chromosome 2 of the plant Arabidopsis thaliana.</title>
        <authorList>
            <person name="Lin X."/>
            <person name="Kaul S."/>
            <person name="Rounsley S.D."/>
            <person name="Shea T.P."/>
            <person name="Benito M.-I."/>
            <person name="Town C.D."/>
            <person name="Fujii C.Y."/>
            <person name="Mason T.M."/>
            <person name="Bowman C.L."/>
            <person name="Barnstead M.E."/>
            <person name="Feldblyum T.V."/>
            <person name="Buell C.R."/>
            <person name="Ketchum K.A."/>
            <person name="Lee J.J."/>
            <person name="Ronning C.M."/>
            <person name="Koo H.L."/>
            <person name="Moffat K.S."/>
            <person name="Cronin L.A."/>
            <person name="Shen M."/>
            <person name="Pai G."/>
            <person name="Van Aken S."/>
            <person name="Umayam L."/>
            <person name="Tallon L.J."/>
            <person name="Gill J.E."/>
            <person name="Adams M.D."/>
            <person name="Carrera A.J."/>
            <person name="Creasy T.H."/>
            <person name="Goodman H.M."/>
            <person name="Somerville C.R."/>
            <person name="Copenhaver G.P."/>
            <person name="Preuss D."/>
            <person name="Nierman W.C."/>
            <person name="White O."/>
            <person name="Eisen J.A."/>
            <person name="Salzberg S.L."/>
            <person name="Fraser C.M."/>
            <person name="Venter J.C."/>
        </authorList>
    </citation>
    <scope>NUCLEOTIDE SEQUENCE [LARGE SCALE GENOMIC DNA] (AT2G07733 AND AT2G07689)</scope>
    <source>
        <strain>cv. Columbia</strain>
    </source>
</reference>
<reference key="6">
    <citation type="journal article" date="2017" name="Plant J.">
        <title>Araport11: a complete reannotation of the Arabidopsis thaliana reference genome.</title>
        <authorList>
            <person name="Cheng C.Y."/>
            <person name="Krishnakumar V."/>
            <person name="Chan A.P."/>
            <person name="Thibaud-Nissen F."/>
            <person name="Schobel S."/>
            <person name="Town C.D."/>
        </authorList>
    </citation>
    <scope>GENOME REANNOTATION</scope>
    <source>
        <strain>cv. Columbia</strain>
    </source>
</reference>
<accession>O05000</accession>
<accession>A0A2P2CLE9</accession>
<accession>O04988</accession>
<accession>Q95621</accession>
<keyword id="KW-0002">3D-structure</keyword>
<keyword id="KW-0249">Electron transport</keyword>
<keyword id="KW-0472">Membrane</keyword>
<keyword id="KW-0496">Mitochondrion</keyword>
<keyword id="KW-0999">Mitochondrion inner membrane</keyword>
<keyword id="KW-0520">NAD</keyword>
<keyword id="KW-1185">Reference proteome</keyword>
<keyword id="KW-0679">Respiratory chain</keyword>
<keyword id="KW-0691">RNA editing</keyword>
<keyword id="KW-1278">Translocase</keyword>
<keyword id="KW-0812">Transmembrane</keyword>
<keyword id="KW-1133">Transmembrane helix</keyword>
<keyword id="KW-0813">Transport</keyword>
<keyword id="KW-0830">Ubiquinone</keyword>
<comment type="function">
    <text evidence="1">Core subunit of the mitochondrial membrane respiratory chain NADH dehydrogenase (Complex I) that is believed to belong to the minimal assembly required for catalysis. Complex I functions in the transfer of electrons from NADH to the respiratory chain. The immediate electron acceptor for the enzyme is believed to be ubiquinone (By similarity).</text>
</comment>
<comment type="catalytic activity">
    <reaction>
        <text>a ubiquinone + NADH + 5 H(+)(in) = a ubiquinol + NAD(+) + 4 H(+)(out)</text>
        <dbReference type="Rhea" id="RHEA:29091"/>
        <dbReference type="Rhea" id="RHEA-COMP:9565"/>
        <dbReference type="Rhea" id="RHEA-COMP:9566"/>
        <dbReference type="ChEBI" id="CHEBI:15378"/>
        <dbReference type="ChEBI" id="CHEBI:16389"/>
        <dbReference type="ChEBI" id="CHEBI:17976"/>
        <dbReference type="ChEBI" id="CHEBI:57540"/>
        <dbReference type="ChEBI" id="CHEBI:57945"/>
        <dbReference type="EC" id="7.1.1.2"/>
    </reaction>
</comment>
<comment type="subunit">
    <text>Complex I is composed of at least 49 different subunits.</text>
</comment>
<comment type="subcellular location">
    <subcellularLocation>
        <location>Mitochondrion inner membrane</location>
        <topology>Multi-pass membrane protein</topology>
    </subcellularLocation>
</comment>
<comment type="RNA editing">
    <location>
        <position position="20" evidence="3 4"/>
    </location>
    <location>
        <position position="30" evidence="3 4"/>
    </location>
    <location>
        <position position="114" evidence="3 4"/>
    </location>
    <location>
        <position position="115" evidence="3 4"/>
    </location>
    <location>
        <position position="130" evidence="3 4"/>
    </location>
    <location>
        <position position="132" evidence="3 4"/>
    </location>
    <location>
        <position position="134" evidence="3 4"/>
    </location>
    <location>
        <position position="143" evidence="3 4"/>
    </location>
    <location>
        <position position="154" evidence="3 4"/>
    </location>
    <location>
        <position position="177" evidence="3 4"/>
    </location>
    <location>
        <position position="232" evidence="3 4"/>
    </location>
    <location>
        <position position="274" evidence="3 4"/>
    </location>
    <location>
        <position position="281" evidence="3 4"/>
    </location>
    <location>
        <position position="318" evidence="3 4"/>
    </location>
    <location>
        <position position="321" evidence="3 4"/>
    </location>
    <location>
        <position position="331" evidence="3 4"/>
    </location>
    <location>
        <position position="332" evidence="3 4"/>
    </location>
    <location>
        <position position="364" evidence="3 4"/>
    </location>
    <location>
        <position position="387" evidence="3 4"/>
    </location>
    <location>
        <position position="427" evidence="3 4"/>
    </location>
    <location>
        <position position="437" evidence="3 4"/>
    </location>
    <location>
        <position position="478" evidence="3 4"/>
    </location>
    <location>
        <position position="479" evidence="3 4"/>
    </location>
    <location>
        <position position="497" evidence="3 4"/>
    </location>
</comment>
<comment type="miscellaneous">
    <text>Exons a and b (AtMg00285) and c, d and e (AtMg01320) are cis-spliced, while a trans-splicing reaction is required to link exons b and c.</text>
</comment>
<comment type="miscellaneous">
    <text>A stretch of 270 kb of the mitochondrial genome is duplicated within the centromere of chromosome 2 resulting in the duplication of the gene. The expression of this duplicated gene (At2g07733 and At2g07689) is not demonstrated. It is also probably not RNA edited and therefore differs in all the positions known to be edited.</text>
</comment>
<comment type="sequence caution" evidence="5">
    <conflict type="erroneous initiation">
        <sequence resource="EMBL-CDS" id="DAB41493"/>
    </conflict>
    <text>Truncated N-terminus.</text>
</comment>
<organism>
    <name type="scientific">Arabidopsis thaliana</name>
    <name type="common">Mouse-ear cress</name>
    <dbReference type="NCBI Taxonomy" id="3702"/>
    <lineage>
        <taxon>Eukaryota</taxon>
        <taxon>Viridiplantae</taxon>
        <taxon>Streptophyta</taxon>
        <taxon>Embryophyta</taxon>
        <taxon>Tracheophyta</taxon>
        <taxon>Spermatophyta</taxon>
        <taxon>Magnoliopsida</taxon>
        <taxon>eudicotyledons</taxon>
        <taxon>Gunneridae</taxon>
        <taxon>Pentapetalae</taxon>
        <taxon>rosids</taxon>
        <taxon>malvids</taxon>
        <taxon>Brassicales</taxon>
        <taxon>Brassicaceae</taxon>
        <taxon>Camelineae</taxon>
        <taxon>Arabidopsis</taxon>
    </lineage>
</organism>
<sequence>MKAEFVRILPHMFNLFLAVFPEIFIINATFILLIHGVVFSTSKKYDYPPLASNVGWLGLLSVLITLLLLAAGAPLLTIAHLFWNNLFRRDNFTYFCQIFLLLSTAGTISMCFDFFDQERFDAFEFIVLILLSTCGMLFMISAYDLIAMYLAIELQSLCFYVIAASKRKSEFSTEAGLKYLILGAFSSGILLFPCSMIYGSTGATHFDQLAKILTGYEITGARSSGIFMGILFIAVGFLFKITAVPFHMWAPDIYEGSPTPVTAFLSIAPKISIFANILRVFIYGSYGATLQQIFFFCSIASMILGALAAMAQTKVKRLLAYSSIGHVGYICIGFSCGTIEGIQSLLIGIFIYALMTMDAFAIVLALRQTRVKYIADLGALAKTNPILAITFSITMFSYAGIPPLAGFCSKFYLFFAALGCGAYFLALVGVVTSVIGCFYYIRLVKRMFFDTPRTWILYEPMDRNKSLLLAMTSFFITLFLLYPSPLFSVTHQMALSLYL</sequence>
<gene>
    <name type="primary">ND2</name>
    <name type="synonym">NAD2</name>
    <name type="ordered locus">AtMg00285/AtMg01320</name>
</gene>
<proteinExistence type="evidence at protein level"/>
<name>NU2M_ARATH</name>
<geneLocation type="mitochondrion"/>
<evidence type="ECO:0000250" key="1"/>
<evidence type="ECO:0000255" key="2"/>
<evidence type="ECO:0000269" key="3">
    <source>
    </source>
</evidence>
<evidence type="ECO:0000269" key="4">
    <source>
    </source>
</evidence>
<evidence type="ECO:0000305" key="5"/>
<evidence type="ECO:0007829" key="6">
    <source>
        <dbReference type="PDB" id="7AQQ"/>
    </source>
</evidence>
<evidence type="ECO:0007829" key="7">
    <source>
        <dbReference type="PDB" id="8BEF"/>
    </source>
</evidence>
<protein>
    <recommendedName>
        <fullName>NADH-ubiquinone oxidoreductase chain 2</fullName>
        <ecNumber>7.1.1.2</ecNumber>
    </recommendedName>
    <alternativeName>
        <fullName>NADH dehydrogenase subunit 2</fullName>
    </alternativeName>
</protein>